<sequence length="316" mass="34912">MKILVTGAAGFIGSHLCEELLKDKKHNVIGIDDFIGPTPFSLKLKNLKNLLPEKRFTFIKENLLTADLASLLEGVDVIFHLAAIPGVRSSWGNHFHPYAAHNIQALQRLLEACREHSIQTFVFASTSSVYGEKQGKVSENTSLSPLSPYGVTKLTGEKLCHVYKQSFGIPIVILRFFTVYGPRQRPDMAFHRLIKQHLQQKPLTIFGDGQQSRDFTYISDCVKGITAVLGKPHLIGETVNIGGAERASVLKVVSLIEDISGRKATLHFSDKIAGEPSNTWADISKAKQLLHYDPATSLKDGLTNEIAYLSSLYQGE</sequence>
<organism>
    <name type="scientific">Bacillus subtilis (strain 168)</name>
    <dbReference type="NCBI Taxonomy" id="224308"/>
    <lineage>
        <taxon>Bacteria</taxon>
        <taxon>Bacillati</taxon>
        <taxon>Bacillota</taxon>
        <taxon>Bacilli</taxon>
        <taxon>Bacillales</taxon>
        <taxon>Bacillaceae</taxon>
        <taxon>Bacillus</taxon>
    </lineage>
</organism>
<keyword id="KW-0456">Lyase</keyword>
<keyword id="KW-1185">Reference proteome</keyword>
<reference key="1">
    <citation type="journal article" date="1997" name="Microbiology">
        <title>Sequencing and functional annotation of the Bacillus subtilis genes in the 200 kb rrnB-dnaB region.</title>
        <authorList>
            <person name="Lapidus A."/>
            <person name="Galleron N."/>
            <person name="Sorokin A."/>
            <person name="Ehrlich S.D."/>
        </authorList>
    </citation>
    <scope>NUCLEOTIDE SEQUENCE [GENOMIC DNA]</scope>
    <source>
        <strain>168</strain>
    </source>
</reference>
<reference key="2">
    <citation type="journal article" date="1997" name="Nature">
        <title>The complete genome sequence of the Gram-positive bacterium Bacillus subtilis.</title>
        <authorList>
            <person name="Kunst F."/>
            <person name="Ogasawara N."/>
            <person name="Moszer I."/>
            <person name="Albertini A.M."/>
            <person name="Alloni G."/>
            <person name="Azevedo V."/>
            <person name="Bertero M.G."/>
            <person name="Bessieres P."/>
            <person name="Bolotin A."/>
            <person name="Borchert S."/>
            <person name="Borriss R."/>
            <person name="Boursier L."/>
            <person name="Brans A."/>
            <person name="Braun M."/>
            <person name="Brignell S.C."/>
            <person name="Bron S."/>
            <person name="Brouillet S."/>
            <person name="Bruschi C.V."/>
            <person name="Caldwell B."/>
            <person name="Capuano V."/>
            <person name="Carter N.M."/>
            <person name="Choi S.-K."/>
            <person name="Codani J.-J."/>
            <person name="Connerton I.F."/>
            <person name="Cummings N.J."/>
            <person name="Daniel R.A."/>
            <person name="Denizot F."/>
            <person name="Devine K.M."/>
            <person name="Duesterhoeft A."/>
            <person name="Ehrlich S.D."/>
            <person name="Emmerson P.T."/>
            <person name="Entian K.-D."/>
            <person name="Errington J."/>
            <person name="Fabret C."/>
            <person name="Ferrari E."/>
            <person name="Foulger D."/>
            <person name="Fritz C."/>
            <person name="Fujita M."/>
            <person name="Fujita Y."/>
            <person name="Fuma S."/>
            <person name="Galizzi A."/>
            <person name="Galleron N."/>
            <person name="Ghim S.-Y."/>
            <person name="Glaser P."/>
            <person name="Goffeau A."/>
            <person name="Golightly E.J."/>
            <person name="Grandi G."/>
            <person name="Guiseppi G."/>
            <person name="Guy B.J."/>
            <person name="Haga K."/>
            <person name="Haiech J."/>
            <person name="Harwood C.R."/>
            <person name="Henaut A."/>
            <person name="Hilbert H."/>
            <person name="Holsappel S."/>
            <person name="Hosono S."/>
            <person name="Hullo M.-F."/>
            <person name="Itaya M."/>
            <person name="Jones L.-M."/>
            <person name="Joris B."/>
            <person name="Karamata D."/>
            <person name="Kasahara Y."/>
            <person name="Klaerr-Blanchard M."/>
            <person name="Klein C."/>
            <person name="Kobayashi Y."/>
            <person name="Koetter P."/>
            <person name="Koningstein G."/>
            <person name="Krogh S."/>
            <person name="Kumano M."/>
            <person name="Kurita K."/>
            <person name="Lapidus A."/>
            <person name="Lardinois S."/>
            <person name="Lauber J."/>
            <person name="Lazarevic V."/>
            <person name="Lee S.-M."/>
            <person name="Levine A."/>
            <person name="Liu H."/>
            <person name="Masuda S."/>
            <person name="Mauel C."/>
            <person name="Medigue C."/>
            <person name="Medina N."/>
            <person name="Mellado R.P."/>
            <person name="Mizuno M."/>
            <person name="Moestl D."/>
            <person name="Nakai S."/>
            <person name="Noback M."/>
            <person name="Noone D."/>
            <person name="O'Reilly M."/>
            <person name="Ogawa K."/>
            <person name="Ogiwara A."/>
            <person name="Oudega B."/>
            <person name="Park S.-H."/>
            <person name="Parro V."/>
            <person name="Pohl T.M."/>
            <person name="Portetelle D."/>
            <person name="Porwollik S."/>
            <person name="Prescott A.M."/>
            <person name="Presecan E."/>
            <person name="Pujic P."/>
            <person name="Purnelle B."/>
            <person name="Rapoport G."/>
            <person name="Rey M."/>
            <person name="Reynolds S."/>
            <person name="Rieger M."/>
            <person name="Rivolta C."/>
            <person name="Rocha E."/>
            <person name="Roche B."/>
            <person name="Rose M."/>
            <person name="Sadaie Y."/>
            <person name="Sato T."/>
            <person name="Scanlan E."/>
            <person name="Schleich S."/>
            <person name="Schroeter R."/>
            <person name="Scoffone F."/>
            <person name="Sekiguchi J."/>
            <person name="Sekowska A."/>
            <person name="Seror S.J."/>
            <person name="Serror P."/>
            <person name="Shin B.-S."/>
            <person name="Soldo B."/>
            <person name="Sorokin A."/>
            <person name="Tacconi E."/>
            <person name="Takagi T."/>
            <person name="Takahashi H."/>
            <person name="Takemaru K."/>
            <person name="Takeuchi M."/>
            <person name="Tamakoshi A."/>
            <person name="Tanaka T."/>
            <person name="Terpstra P."/>
            <person name="Tognoni A."/>
            <person name="Tosato V."/>
            <person name="Uchiyama S."/>
            <person name="Vandenbol M."/>
            <person name="Vannier F."/>
            <person name="Vassarotti A."/>
            <person name="Viari A."/>
            <person name="Wambutt R."/>
            <person name="Wedler E."/>
            <person name="Wedler H."/>
            <person name="Weitzenegger T."/>
            <person name="Winters P."/>
            <person name="Wipat A."/>
            <person name="Yamamoto H."/>
            <person name="Yamane K."/>
            <person name="Yasumoto K."/>
            <person name="Yata K."/>
            <person name="Yoshida K."/>
            <person name="Yoshikawa H.-F."/>
            <person name="Zumstein E."/>
            <person name="Yoshikawa H."/>
            <person name="Danchin A."/>
        </authorList>
    </citation>
    <scope>NUCLEOTIDE SEQUENCE [LARGE SCALE GENOMIC DNA]</scope>
    <source>
        <strain>168</strain>
    </source>
</reference>
<accession>O34886</accession>
<accession>Q795N4</accession>
<comment type="similarity">
    <text evidence="2">Belongs to the NAD(P)-dependent epimerase/dehydratase family.</text>
</comment>
<gene>
    <name type="primary">ytcB</name>
    <name type="ordered locus">BSU30870</name>
</gene>
<proteinExistence type="inferred from homology"/>
<name>YTCB_BACSU</name>
<feature type="chain" id="PRO_0000360625" description="Uncharacterized UDP-glucose epimerase YtcB">
    <location>
        <begin position="1"/>
        <end position="316"/>
    </location>
</feature>
<feature type="active site" description="Proton acceptor" evidence="1">
    <location>
        <position position="149"/>
    </location>
</feature>
<feature type="binding site" evidence="1">
    <location>
        <position position="126"/>
    </location>
    <ligand>
        <name>substrate</name>
    </ligand>
</feature>
<protein>
    <recommendedName>
        <fullName>Uncharacterized UDP-glucose epimerase YtcB</fullName>
        <ecNumber>4.-.-.-</ecNumber>
    </recommendedName>
</protein>
<dbReference type="EC" id="4.-.-.-"/>
<dbReference type="EMBL" id="AF008220">
    <property type="protein sequence ID" value="AAC00366.1"/>
    <property type="molecule type" value="Genomic_DNA"/>
</dbReference>
<dbReference type="EMBL" id="AL009126">
    <property type="protein sequence ID" value="CAB15065.1"/>
    <property type="molecule type" value="Genomic_DNA"/>
</dbReference>
<dbReference type="PIR" id="H69988">
    <property type="entry name" value="H69988"/>
</dbReference>
<dbReference type="RefSeq" id="NP_390965.1">
    <property type="nucleotide sequence ID" value="NC_000964.3"/>
</dbReference>
<dbReference type="RefSeq" id="WP_003229036.1">
    <property type="nucleotide sequence ID" value="NZ_OZ025638.1"/>
</dbReference>
<dbReference type="SMR" id="O34886"/>
<dbReference type="FunCoup" id="O34886">
    <property type="interactions" value="440"/>
</dbReference>
<dbReference type="STRING" id="224308.BSU30870"/>
<dbReference type="PaxDb" id="224308-BSU30870"/>
<dbReference type="EnsemblBacteria" id="CAB15065">
    <property type="protein sequence ID" value="CAB15065"/>
    <property type="gene ID" value="BSU_30870"/>
</dbReference>
<dbReference type="GeneID" id="938900"/>
<dbReference type="KEGG" id="bsu:BSU30870"/>
<dbReference type="PATRIC" id="fig|224308.179.peg.3346"/>
<dbReference type="eggNOG" id="COG0451">
    <property type="taxonomic scope" value="Bacteria"/>
</dbReference>
<dbReference type="InParanoid" id="O34886"/>
<dbReference type="OrthoDB" id="9811743at2"/>
<dbReference type="PhylomeDB" id="O34886"/>
<dbReference type="BioCyc" id="BSUB:BSU30870-MONOMER"/>
<dbReference type="Proteomes" id="UP000001570">
    <property type="component" value="Chromosome"/>
</dbReference>
<dbReference type="GO" id="GO:0016829">
    <property type="term" value="F:lyase activity"/>
    <property type="evidence" value="ECO:0007669"/>
    <property type="project" value="UniProtKB-KW"/>
</dbReference>
<dbReference type="Gene3D" id="3.40.50.720">
    <property type="entry name" value="NAD(P)-binding Rossmann-like Domain"/>
    <property type="match status" value="1"/>
</dbReference>
<dbReference type="InterPro" id="IPR001509">
    <property type="entry name" value="Epimerase_deHydtase"/>
</dbReference>
<dbReference type="InterPro" id="IPR036291">
    <property type="entry name" value="NAD(P)-bd_dom_sf"/>
</dbReference>
<dbReference type="PANTHER" id="PTHR43000">
    <property type="entry name" value="DTDP-D-GLUCOSE 4,6-DEHYDRATASE-RELATED"/>
    <property type="match status" value="1"/>
</dbReference>
<dbReference type="Pfam" id="PF01370">
    <property type="entry name" value="Epimerase"/>
    <property type="match status" value="1"/>
</dbReference>
<dbReference type="SUPFAM" id="SSF51735">
    <property type="entry name" value="NAD(P)-binding Rossmann-fold domains"/>
    <property type="match status" value="1"/>
</dbReference>
<evidence type="ECO:0000250" key="1"/>
<evidence type="ECO:0000305" key="2"/>